<comment type="tissue specificity">
    <text evidence="1">Nacreous layer of shell.</text>
</comment>
<reference key="1">
    <citation type="journal article" date="2009" name="ChemBioChem">
        <title>Evolution of nacre: biochemistry and 'shellomics' of the shell organic matrix of the cephalopod Nautilus macromphalus.</title>
        <authorList>
            <person name="Marie B."/>
            <person name="Marin F."/>
            <person name="Marie A."/>
            <person name="Bedouet L."/>
            <person name="Dubost L."/>
            <person name="Alcaraz G."/>
            <person name="Milet C."/>
            <person name="Luquet G."/>
        </authorList>
    </citation>
    <scope>PROTEIN SEQUENCE</scope>
    <scope>TISSUE SPECIFICITY</scope>
    <source>
        <tissue>Shell</tissue>
    </source>
</reference>
<accession>P85392</accession>
<organism>
    <name type="scientific">Nautilus macromphalus</name>
    <name type="common">Bellybutton nautilus</name>
    <dbReference type="NCBI Taxonomy" id="34576"/>
    <lineage>
        <taxon>Eukaryota</taxon>
        <taxon>Metazoa</taxon>
        <taxon>Spiralia</taxon>
        <taxon>Lophotrochozoa</taxon>
        <taxon>Mollusca</taxon>
        <taxon>Cephalopoda</taxon>
        <taxon>Nautiloidea</taxon>
        <taxon>Nautilida</taxon>
        <taxon>Nautilidae</taxon>
        <taxon>Nautilus</taxon>
    </lineage>
</organism>
<feature type="chain" id="PRO_0000371492" description="Uncharacterized protein SMPP11">
    <location>
        <begin position="1" status="less than"/>
        <end position="8" status="greater than"/>
    </location>
</feature>
<feature type="unsure residue" description="L or I" evidence="1">
    <location>
        <position position="5"/>
    </location>
</feature>
<feature type="non-terminal residue" evidence="2">
    <location>
        <position position="1"/>
    </location>
</feature>
<feature type="non-terminal residue" evidence="2">
    <location>
        <position position="8"/>
    </location>
</feature>
<protein>
    <recommendedName>
        <fullName evidence="2">Uncharacterized protein SMPP11</fullName>
    </recommendedName>
</protein>
<sequence>TSFTLYMR</sequence>
<evidence type="ECO:0000269" key="1">
    <source>
    </source>
</evidence>
<evidence type="ECO:0000303" key="2">
    <source>
    </source>
</evidence>
<name>SMP11_NAUMA</name>
<proteinExistence type="evidence at protein level"/>
<keyword id="KW-0903">Direct protein sequencing</keyword>